<name>DDL_THEM4</name>
<gene>
    <name evidence="2" type="primary">ddl</name>
    <name type="ordered locus">Tmel_0486</name>
</gene>
<keyword id="KW-0067">ATP-binding</keyword>
<keyword id="KW-0133">Cell shape</keyword>
<keyword id="KW-0961">Cell wall biogenesis/degradation</keyword>
<keyword id="KW-0963">Cytoplasm</keyword>
<keyword id="KW-0436">Ligase</keyword>
<keyword id="KW-0460">Magnesium</keyword>
<keyword id="KW-0464">Manganese</keyword>
<keyword id="KW-0479">Metal-binding</keyword>
<keyword id="KW-0547">Nucleotide-binding</keyword>
<keyword id="KW-0573">Peptidoglycan synthesis</keyword>
<protein>
    <recommendedName>
        <fullName evidence="2">D-alanine--D-alanine ligase</fullName>
        <ecNumber evidence="2">6.3.2.4</ecNumber>
    </recommendedName>
    <alternativeName>
        <fullName evidence="2">D-Ala-D-Ala ligase</fullName>
    </alternativeName>
    <alternativeName>
        <fullName evidence="2">D-alanylalanine synthetase</fullName>
    </alternativeName>
</protein>
<evidence type="ECO:0000250" key="1"/>
<evidence type="ECO:0000255" key="2">
    <source>
        <dbReference type="HAMAP-Rule" id="MF_00047"/>
    </source>
</evidence>
<accession>A6LKA2</accession>
<organism>
    <name type="scientific">Thermosipho melanesiensis (strain DSM 12029 / CIP 104789 / BI429)</name>
    <dbReference type="NCBI Taxonomy" id="391009"/>
    <lineage>
        <taxon>Bacteria</taxon>
        <taxon>Thermotogati</taxon>
        <taxon>Thermotogota</taxon>
        <taxon>Thermotogae</taxon>
        <taxon>Thermotogales</taxon>
        <taxon>Fervidobacteriaceae</taxon>
        <taxon>Thermosipho</taxon>
    </lineage>
</organism>
<reference key="1">
    <citation type="submission" date="2007-05" db="EMBL/GenBank/DDBJ databases">
        <title>Complete sequence of Thermosipho melanesiensis BI429.</title>
        <authorList>
            <consortium name="US DOE Joint Genome Institute"/>
            <person name="Copeland A."/>
            <person name="Lucas S."/>
            <person name="Lapidus A."/>
            <person name="Barry K."/>
            <person name="Glavina del Rio T."/>
            <person name="Dalin E."/>
            <person name="Tice H."/>
            <person name="Pitluck S."/>
            <person name="Chertkov O."/>
            <person name="Brettin T."/>
            <person name="Bruce D."/>
            <person name="Detter J.C."/>
            <person name="Han C."/>
            <person name="Schmutz J."/>
            <person name="Larimer F."/>
            <person name="Land M."/>
            <person name="Hauser L."/>
            <person name="Kyrpides N."/>
            <person name="Mikhailova N."/>
            <person name="Nelson K."/>
            <person name="Gogarten J.P."/>
            <person name="Noll K."/>
            <person name="Richardson P."/>
        </authorList>
    </citation>
    <scope>NUCLEOTIDE SEQUENCE [LARGE SCALE GENOMIC DNA]</scope>
    <source>
        <strain>DSM 12029 / CIP 104789 / BI429</strain>
    </source>
</reference>
<comment type="function">
    <text evidence="2">Cell wall formation.</text>
</comment>
<comment type="catalytic activity">
    <reaction evidence="2">
        <text>2 D-alanine + ATP = D-alanyl-D-alanine + ADP + phosphate + H(+)</text>
        <dbReference type="Rhea" id="RHEA:11224"/>
        <dbReference type="ChEBI" id="CHEBI:15378"/>
        <dbReference type="ChEBI" id="CHEBI:30616"/>
        <dbReference type="ChEBI" id="CHEBI:43474"/>
        <dbReference type="ChEBI" id="CHEBI:57416"/>
        <dbReference type="ChEBI" id="CHEBI:57822"/>
        <dbReference type="ChEBI" id="CHEBI:456216"/>
        <dbReference type="EC" id="6.3.2.4"/>
    </reaction>
</comment>
<comment type="cofactor">
    <cofactor evidence="1">
        <name>Mg(2+)</name>
        <dbReference type="ChEBI" id="CHEBI:18420"/>
    </cofactor>
    <cofactor evidence="1">
        <name>Mn(2+)</name>
        <dbReference type="ChEBI" id="CHEBI:29035"/>
    </cofactor>
    <text evidence="1">Binds 2 magnesium or manganese ions per subunit.</text>
</comment>
<comment type="pathway">
    <text evidence="2">Cell wall biogenesis; peptidoglycan biosynthesis.</text>
</comment>
<comment type="subcellular location">
    <subcellularLocation>
        <location evidence="2">Cytoplasm</location>
    </subcellularLocation>
</comment>
<comment type="similarity">
    <text evidence="2">Belongs to the D-alanine--D-alanine ligase family.</text>
</comment>
<proteinExistence type="inferred from homology"/>
<feature type="chain" id="PRO_1000030516" description="D-alanine--D-alanine ligase">
    <location>
        <begin position="1"/>
        <end position="361"/>
    </location>
</feature>
<feature type="domain" description="ATP-grasp" evidence="2">
    <location>
        <begin position="139"/>
        <end position="336"/>
    </location>
</feature>
<feature type="binding site" evidence="2">
    <location>
        <begin position="167"/>
        <end position="222"/>
    </location>
    <ligand>
        <name>ATP</name>
        <dbReference type="ChEBI" id="CHEBI:30616"/>
    </ligand>
</feature>
<feature type="binding site" evidence="2">
    <location>
        <position position="296"/>
    </location>
    <ligand>
        <name>Mg(2+)</name>
        <dbReference type="ChEBI" id="CHEBI:18420"/>
        <label>1</label>
    </ligand>
</feature>
<feature type="binding site" evidence="2">
    <location>
        <position position="307"/>
    </location>
    <ligand>
        <name>Mg(2+)</name>
        <dbReference type="ChEBI" id="CHEBI:18420"/>
        <label>1</label>
    </ligand>
</feature>
<feature type="binding site" evidence="2">
    <location>
        <position position="307"/>
    </location>
    <ligand>
        <name>Mg(2+)</name>
        <dbReference type="ChEBI" id="CHEBI:18420"/>
        <label>2</label>
    </ligand>
</feature>
<feature type="binding site" evidence="2">
    <location>
        <position position="309"/>
    </location>
    <ligand>
        <name>Mg(2+)</name>
        <dbReference type="ChEBI" id="CHEBI:18420"/>
        <label>2</label>
    </ligand>
</feature>
<dbReference type="EC" id="6.3.2.4" evidence="2"/>
<dbReference type="EMBL" id="CP000716">
    <property type="protein sequence ID" value="ABR30353.1"/>
    <property type="molecule type" value="Genomic_DNA"/>
</dbReference>
<dbReference type="RefSeq" id="WP_012056714.1">
    <property type="nucleotide sequence ID" value="NC_009616.1"/>
</dbReference>
<dbReference type="SMR" id="A6LKA2"/>
<dbReference type="STRING" id="391009.Tmel_0486"/>
<dbReference type="KEGG" id="tme:Tmel_0486"/>
<dbReference type="eggNOG" id="COG1181">
    <property type="taxonomic scope" value="Bacteria"/>
</dbReference>
<dbReference type="HOGENOM" id="CLU_039268_0_1_0"/>
<dbReference type="OrthoDB" id="9813261at2"/>
<dbReference type="UniPathway" id="UPA00219"/>
<dbReference type="Proteomes" id="UP000001110">
    <property type="component" value="Chromosome"/>
</dbReference>
<dbReference type="GO" id="GO:0005829">
    <property type="term" value="C:cytosol"/>
    <property type="evidence" value="ECO:0007669"/>
    <property type="project" value="TreeGrafter"/>
</dbReference>
<dbReference type="GO" id="GO:0005524">
    <property type="term" value="F:ATP binding"/>
    <property type="evidence" value="ECO:0007669"/>
    <property type="project" value="UniProtKB-KW"/>
</dbReference>
<dbReference type="GO" id="GO:0008716">
    <property type="term" value="F:D-alanine-D-alanine ligase activity"/>
    <property type="evidence" value="ECO:0007669"/>
    <property type="project" value="UniProtKB-UniRule"/>
</dbReference>
<dbReference type="GO" id="GO:0046872">
    <property type="term" value="F:metal ion binding"/>
    <property type="evidence" value="ECO:0007669"/>
    <property type="project" value="UniProtKB-KW"/>
</dbReference>
<dbReference type="GO" id="GO:0071555">
    <property type="term" value="P:cell wall organization"/>
    <property type="evidence" value="ECO:0007669"/>
    <property type="project" value="UniProtKB-KW"/>
</dbReference>
<dbReference type="GO" id="GO:0009252">
    <property type="term" value="P:peptidoglycan biosynthetic process"/>
    <property type="evidence" value="ECO:0007669"/>
    <property type="project" value="UniProtKB-UniRule"/>
</dbReference>
<dbReference type="GO" id="GO:0008360">
    <property type="term" value="P:regulation of cell shape"/>
    <property type="evidence" value="ECO:0007669"/>
    <property type="project" value="UniProtKB-KW"/>
</dbReference>
<dbReference type="FunFam" id="3.30.1490.20:FF:000007">
    <property type="entry name" value="D-alanine--D-alanine ligase"/>
    <property type="match status" value="1"/>
</dbReference>
<dbReference type="Gene3D" id="3.40.50.20">
    <property type="match status" value="1"/>
</dbReference>
<dbReference type="Gene3D" id="3.30.1490.20">
    <property type="entry name" value="ATP-grasp fold, A domain"/>
    <property type="match status" value="1"/>
</dbReference>
<dbReference type="Gene3D" id="3.30.470.20">
    <property type="entry name" value="ATP-grasp fold, B domain"/>
    <property type="match status" value="1"/>
</dbReference>
<dbReference type="HAMAP" id="MF_00047">
    <property type="entry name" value="Dala_Dala_lig"/>
    <property type="match status" value="1"/>
</dbReference>
<dbReference type="InterPro" id="IPR011761">
    <property type="entry name" value="ATP-grasp"/>
</dbReference>
<dbReference type="InterPro" id="IPR013815">
    <property type="entry name" value="ATP_grasp_subdomain_1"/>
</dbReference>
<dbReference type="InterPro" id="IPR000291">
    <property type="entry name" value="D-Ala_lig_Van_CS"/>
</dbReference>
<dbReference type="InterPro" id="IPR005905">
    <property type="entry name" value="D_ala_D_ala"/>
</dbReference>
<dbReference type="InterPro" id="IPR011095">
    <property type="entry name" value="Dala_Dala_lig_C"/>
</dbReference>
<dbReference type="InterPro" id="IPR011127">
    <property type="entry name" value="Dala_Dala_lig_N"/>
</dbReference>
<dbReference type="InterPro" id="IPR016185">
    <property type="entry name" value="PreATP-grasp_dom_sf"/>
</dbReference>
<dbReference type="NCBIfam" id="TIGR01205">
    <property type="entry name" value="D_ala_D_alaTIGR"/>
    <property type="match status" value="1"/>
</dbReference>
<dbReference type="NCBIfam" id="NF002528">
    <property type="entry name" value="PRK01966.1-4"/>
    <property type="match status" value="1"/>
</dbReference>
<dbReference type="PANTHER" id="PTHR23132">
    <property type="entry name" value="D-ALANINE--D-ALANINE LIGASE"/>
    <property type="match status" value="1"/>
</dbReference>
<dbReference type="PANTHER" id="PTHR23132:SF25">
    <property type="entry name" value="D-ALANINE--D-ALANINE LIGASE A"/>
    <property type="match status" value="1"/>
</dbReference>
<dbReference type="Pfam" id="PF07478">
    <property type="entry name" value="Dala_Dala_lig_C"/>
    <property type="match status" value="1"/>
</dbReference>
<dbReference type="Pfam" id="PF01820">
    <property type="entry name" value="Dala_Dala_lig_N"/>
    <property type="match status" value="1"/>
</dbReference>
<dbReference type="PIRSF" id="PIRSF039102">
    <property type="entry name" value="Ddl/VanB"/>
    <property type="match status" value="1"/>
</dbReference>
<dbReference type="SUPFAM" id="SSF56059">
    <property type="entry name" value="Glutathione synthetase ATP-binding domain-like"/>
    <property type="match status" value="1"/>
</dbReference>
<dbReference type="SUPFAM" id="SSF52440">
    <property type="entry name" value="PreATP-grasp domain"/>
    <property type="match status" value="1"/>
</dbReference>
<dbReference type="PROSITE" id="PS50975">
    <property type="entry name" value="ATP_GRASP"/>
    <property type="match status" value="1"/>
</dbReference>
<dbReference type="PROSITE" id="PS00843">
    <property type="entry name" value="DALA_DALA_LIGASE_1"/>
    <property type="match status" value="1"/>
</dbReference>
<sequence length="361" mass="41621">MLNIGIFFGSKSVEHEISIITAQQVLSSIDRKKYNVIPIYISKSGEWFTGKVLEDLETFKDFDKLEKKAKKIDSFSVKNNKLLLKYGLKKQTIDFCFLVFHGTNGEDGTFQGMCEIFGIPYSGCNHFSSAFTMDKVVTKLLLKEKEISVVDFEYTTEINEEFFKRCEKNLGYPMIVKPARLGSSIGVSKVVDRKNFEEAVKNVLLFDNKVLVEKWINAREINCAVMGYKNIFVSELEEINKKNDFFNFEEKYFKKGKKFSNHIIPARIDENLKNKIKEIAKDTFKILECSGNVRIDFLIADKIYVNEINTIPGALSFYIWQKSGFTFSQIIDNMINMGLERFKDKKIVSIDTNILKIKVGK</sequence>